<protein>
    <recommendedName>
        <fullName>Cecropin-C</fullName>
    </recommendedName>
</protein>
<dbReference type="EMBL" id="AB047063">
    <property type="protein sequence ID" value="BAB78568.1"/>
    <property type="molecule type" value="Genomic_DNA"/>
</dbReference>
<dbReference type="RefSeq" id="XP_017008677.1">
    <property type="nucleotide sequence ID" value="XM_017153188.3"/>
</dbReference>
<dbReference type="SMR" id="P84224"/>
<dbReference type="EnsemblMetazoa" id="XM_017153188.2">
    <property type="protein sequence ID" value="XP_017008677.1"/>
    <property type="gene ID" value="LOC108065258"/>
</dbReference>
<dbReference type="GeneID" id="108065258"/>
<dbReference type="CTD" id="43599"/>
<dbReference type="OMA" id="IAICNVQ"/>
<dbReference type="OrthoDB" id="7410372at2759"/>
<dbReference type="GO" id="GO:0005615">
    <property type="term" value="C:extracellular space"/>
    <property type="evidence" value="ECO:0007669"/>
    <property type="project" value="TreeGrafter"/>
</dbReference>
<dbReference type="GO" id="GO:0019731">
    <property type="term" value="P:antibacterial humoral response"/>
    <property type="evidence" value="ECO:0007669"/>
    <property type="project" value="InterPro"/>
</dbReference>
<dbReference type="GO" id="GO:0050829">
    <property type="term" value="P:defense response to Gram-negative bacterium"/>
    <property type="evidence" value="ECO:0007669"/>
    <property type="project" value="TreeGrafter"/>
</dbReference>
<dbReference type="GO" id="GO:0050830">
    <property type="term" value="P:defense response to Gram-positive bacterium"/>
    <property type="evidence" value="ECO:0007669"/>
    <property type="project" value="UniProtKB-ARBA"/>
</dbReference>
<dbReference type="GO" id="GO:0045087">
    <property type="term" value="P:innate immune response"/>
    <property type="evidence" value="ECO:0007669"/>
    <property type="project" value="UniProtKB-KW"/>
</dbReference>
<dbReference type="InterPro" id="IPR000875">
    <property type="entry name" value="Cecropin"/>
</dbReference>
<dbReference type="InterPro" id="IPR020400">
    <property type="entry name" value="Cecropin_insect"/>
</dbReference>
<dbReference type="PANTHER" id="PTHR38329">
    <property type="entry name" value="CECROPIN-A1-RELATED"/>
    <property type="match status" value="1"/>
</dbReference>
<dbReference type="PANTHER" id="PTHR38329:SF1">
    <property type="entry name" value="CECROPIN-A1-RELATED"/>
    <property type="match status" value="1"/>
</dbReference>
<dbReference type="Pfam" id="PF00272">
    <property type="entry name" value="Cecropin"/>
    <property type="match status" value="1"/>
</dbReference>
<dbReference type="PROSITE" id="PS00268">
    <property type="entry name" value="CECROPIN"/>
    <property type="match status" value="1"/>
</dbReference>
<comment type="function">
    <text>Cecropins have lytic and antibacterial activity against several Gram-positive and Gram-negative bacteria.</text>
</comment>
<comment type="subcellular location">
    <subcellularLocation>
        <location>Secreted</location>
    </subcellularLocation>
</comment>
<comment type="developmental stage">
    <text>Expressed during metamorphosis in pupae.</text>
</comment>
<comment type="similarity">
    <text evidence="2">Belongs to the cecropin family.</text>
</comment>
<feature type="signal peptide" evidence="1">
    <location>
        <begin position="1"/>
        <end position="23"/>
    </location>
</feature>
<feature type="chain" id="PRO_0000004854" description="Cecropin-C">
    <location>
        <begin position="24"/>
        <end position="62"/>
    </location>
</feature>
<feature type="modified residue" description="Arginine amide" evidence="1">
    <location>
        <position position="62"/>
    </location>
</feature>
<proteinExistence type="evidence at transcript level"/>
<evidence type="ECO:0000250" key="1"/>
<evidence type="ECO:0000305" key="2"/>
<accession>P84224</accession>
<accession>Q8WP47</accession>
<sequence length="63" mass="6764">MNFNKIFVFVALILAISLGQSEAGWLKKLGKRIERIGQHTRDATIQGLGIAQQAANVAATARG</sequence>
<name>CECC_DROTK</name>
<reference key="1">
    <citation type="journal article" date="2002" name="J. Mol. Evol.">
        <title>Rapid evolution of the male-specific antibacterial protein andropin gene in Drosophila.</title>
        <authorList>
            <person name="Date-Ito A."/>
            <person name="Kasahara K."/>
            <person name="Sawai H."/>
            <person name="Chigusa S.I."/>
        </authorList>
    </citation>
    <scope>NUCLEOTIDE SEQUENCE [GENOMIC DNA]</scope>
</reference>
<gene>
    <name type="primary">CecC</name>
</gene>
<organism>
    <name type="scientific">Drosophila takahashii</name>
    <name type="common">Fruit fly</name>
    <dbReference type="NCBI Taxonomy" id="29030"/>
    <lineage>
        <taxon>Eukaryota</taxon>
        <taxon>Metazoa</taxon>
        <taxon>Ecdysozoa</taxon>
        <taxon>Arthropoda</taxon>
        <taxon>Hexapoda</taxon>
        <taxon>Insecta</taxon>
        <taxon>Pterygota</taxon>
        <taxon>Neoptera</taxon>
        <taxon>Endopterygota</taxon>
        <taxon>Diptera</taxon>
        <taxon>Brachycera</taxon>
        <taxon>Muscomorpha</taxon>
        <taxon>Ephydroidea</taxon>
        <taxon>Drosophilidae</taxon>
        <taxon>Drosophila</taxon>
        <taxon>Sophophora</taxon>
    </lineage>
</organism>
<keyword id="KW-0027">Amidation</keyword>
<keyword id="KW-0044">Antibiotic</keyword>
<keyword id="KW-0929">Antimicrobial</keyword>
<keyword id="KW-0391">Immunity</keyword>
<keyword id="KW-0399">Innate immunity</keyword>
<keyword id="KW-0964">Secreted</keyword>
<keyword id="KW-0732">Signal</keyword>